<accession>Q6G577</accession>
<dbReference type="EC" id="2.1.1.163" evidence="1"/>
<dbReference type="EC" id="2.1.1.201" evidence="1"/>
<dbReference type="EMBL" id="BX897699">
    <property type="protein sequence ID" value="CAF26856.1"/>
    <property type="molecule type" value="Genomic_DNA"/>
</dbReference>
<dbReference type="RefSeq" id="WP_011180005.1">
    <property type="nucleotide sequence ID" value="NZ_LRIJ02000001.1"/>
</dbReference>
<dbReference type="SMR" id="Q6G577"/>
<dbReference type="PaxDb" id="283166-BH00400"/>
<dbReference type="EnsemblBacteria" id="CAF26856">
    <property type="protein sequence ID" value="CAF26856"/>
    <property type="gene ID" value="BH00400"/>
</dbReference>
<dbReference type="GeneID" id="92986327"/>
<dbReference type="KEGG" id="bhe:BH00400"/>
<dbReference type="eggNOG" id="COG2226">
    <property type="taxonomic scope" value="Bacteria"/>
</dbReference>
<dbReference type="OrthoDB" id="9808140at2"/>
<dbReference type="UniPathway" id="UPA00079">
    <property type="reaction ID" value="UER00169"/>
</dbReference>
<dbReference type="UniPathway" id="UPA00232"/>
<dbReference type="Proteomes" id="UP000000421">
    <property type="component" value="Chromosome"/>
</dbReference>
<dbReference type="GO" id="GO:0008425">
    <property type="term" value="F:2-methoxy-6-polyprenyl-1,4-benzoquinol methyltransferase activity"/>
    <property type="evidence" value="ECO:0007669"/>
    <property type="project" value="UniProtKB-UniRule"/>
</dbReference>
<dbReference type="GO" id="GO:0043770">
    <property type="term" value="F:demethylmenaquinone methyltransferase activity"/>
    <property type="evidence" value="ECO:0007669"/>
    <property type="project" value="UniProtKB-UniRule"/>
</dbReference>
<dbReference type="GO" id="GO:0009060">
    <property type="term" value="P:aerobic respiration"/>
    <property type="evidence" value="ECO:0007669"/>
    <property type="project" value="UniProtKB-UniRule"/>
</dbReference>
<dbReference type="GO" id="GO:0009234">
    <property type="term" value="P:menaquinone biosynthetic process"/>
    <property type="evidence" value="ECO:0007669"/>
    <property type="project" value="UniProtKB-UniRule"/>
</dbReference>
<dbReference type="GO" id="GO:0032259">
    <property type="term" value="P:methylation"/>
    <property type="evidence" value="ECO:0007669"/>
    <property type="project" value="UniProtKB-KW"/>
</dbReference>
<dbReference type="CDD" id="cd02440">
    <property type="entry name" value="AdoMet_MTases"/>
    <property type="match status" value="1"/>
</dbReference>
<dbReference type="Gene3D" id="3.40.50.150">
    <property type="entry name" value="Vaccinia Virus protein VP39"/>
    <property type="match status" value="1"/>
</dbReference>
<dbReference type="HAMAP" id="MF_01813">
    <property type="entry name" value="MenG_UbiE_methyltr"/>
    <property type="match status" value="1"/>
</dbReference>
<dbReference type="InterPro" id="IPR029063">
    <property type="entry name" value="SAM-dependent_MTases_sf"/>
</dbReference>
<dbReference type="InterPro" id="IPR004033">
    <property type="entry name" value="UbiE/COQ5_MeTrFase"/>
</dbReference>
<dbReference type="InterPro" id="IPR023576">
    <property type="entry name" value="UbiE/COQ5_MeTrFase_CS"/>
</dbReference>
<dbReference type="NCBIfam" id="TIGR01934">
    <property type="entry name" value="MenG_MenH_UbiE"/>
    <property type="match status" value="1"/>
</dbReference>
<dbReference type="NCBIfam" id="NF001242">
    <property type="entry name" value="PRK00216.1-3"/>
    <property type="match status" value="1"/>
</dbReference>
<dbReference type="NCBIfam" id="NF001244">
    <property type="entry name" value="PRK00216.1-5"/>
    <property type="match status" value="1"/>
</dbReference>
<dbReference type="PANTHER" id="PTHR43591:SF24">
    <property type="entry name" value="2-METHOXY-6-POLYPRENYL-1,4-BENZOQUINOL METHYLASE, MITOCHONDRIAL"/>
    <property type="match status" value="1"/>
</dbReference>
<dbReference type="PANTHER" id="PTHR43591">
    <property type="entry name" value="METHYLTRANSFERASE"/>
    <property type="match status" value="1"/>
</dbReference>
<dbReference type="Pfam" id="PF01209">
    <property type="entry name" value="Ubie_methyltran"/>
    <property type="match status" value="1"/>
</dbReference>
<dbReference type="SUPFAM" id="SSF53335">
    <property type="entry name" value="S-adenosyl-L-methionine-dependent methyltransferases"/>
    <property type="match status" value="1"/>
</dbReference>
<dbReference type="PROSITE" id="PS51608">
    <property type="entry name" value="SAM_MT_UBIE"/>
    <property type="match status" value="1"/>
</dbReference>
<dbReference type="PROSITE" id="PS01183">
    <property type="entry name" value="UBIE_1"/>
    <property type="match status" value="1"/>
</dbReference>
<dbReference type="PROSITE" id="PS01184">
    <property type="entry name" value="UBIE_2"/>
    <property type="match status" value="1"/>
</dbReference>
<evidence type="ECO:0000255" key="1">
    <source>
        <dbReference type="HAMAP-Rule" id="MF_01813"/>
    </source>
</evidence>
<comment type="function">
    <text evidence="1">Methyltransferase required for the conversion of demethylmenaquinol (DMKH2) to menaquinol (MKH2) and the conversion of 2-polyprenyl-6-methoxy-1,4-benzoquinol (DDMQH2) to 2-polyprenyl-3-methyl-6-methoxy-1,4-benzoquinol (DMQH2).</text>
</comment>
<comment type="catalytic activity">
    <reaction evidence="1">
        <text>a 2-demethylmenaquinol + S-adenosyl-L-methionine = a menaquinol + S-adenosyl-L-homocysteine + H(+)</text>
        <dbReference type="Rhea" id="RHEA:42640"/>
        <dbReference type="Rhea" id="RHEA-COMP:9539"/>
        <dbReference type="Rhea" id="RHEA-COMP:9563"/>
        <dbReference type="ChEBI" id="CHEBI:15378"/>
        <dbReference type="ChEBI" id="CHEBI:18151"/>
        <dbReference type="ChEBI" id="CHEBI:55437"/>
        <dbReference type="ChEBI" id="CHEBI:57856"/>
        <dbReference type="ChEBI" id="CHEBI:59789"/>
        <dbReference type="EC" id="2.1.1.163"/>
    </reaction>
</comment>
<comment type="catalytic activity">
    <reaction evidence="1">
        <text>a 2-methoxy-6-(all-trans-polyprenyl)benzene-1,4-diol + S-adenosyl-L-methionine = a 5-methoxy-2-methyl-3-(all-trans-polyprenyl)benzene-1,4-diol + S-adenosyl-L-homocysteine + H(+)</text>
        <dbReference type="Rhea" id="RHEA:28286"/>
        <dbReference type="Rhea" id="RHEA-COMP:10858"/>
        <dbReference type="Rhea" id="RHEA-COMP:10859"/>
        <dbReference type="ChEBI" id="CHEBI:15378"/>
        <dbReference type="ChEBI" id="CHEBI:57856"/>
        <dbReference type="ChEBI" id="CHEBI:59789"/>
        <dbReference type="ChEBI" id="CHEBI:84166"/>
        <dbReference type="ChEBI" id="CHEBI:84167"/>
        <dbReference type="EC" id="2.1.1.201"/>
    </reaction>
</comment>
<comment type="pathway">
    <text evidence="1">Quinol/quinone metabolism; menaquinone biosynthesis; menaquinol from 1,4-dihydroxy-2-naphthoate: step 2/2.</text>
</comment>
<comment type="pathway">
    <text evidence="1">Cofactor biosynthesis; ubiquinone biosynthesis.</text>
</comment>
<comment type="similarity">
    <text evidence="1">Belongs to the class I-like SAM-binding methyltransferase superfamily. MenG/UbiE family.</text>
</comment>
<feature type="chain" id="PRO_0000193249" description="Ubiquinone/menaquinone biosynthesis C-methyltransferase UbiE">
    <location>
        <begin position="1"/>
        <end position="260"/>
    </location>
</feature>
<feature type="binding site" evidence="1">
    <location>
        <position position="83"/>
    </location>
    <ligand>
        <name>S-adenosyl-L-methionine</name>
        <dbReference type="ChEBI" id="CHEBI:59789"/>
    </ligand>
</feature>
<feature type="binding site" evidence="1">
    <location>
        <position position="104"/>
    </location>
    <ligand>
        <name>S-adenosyl-L-methionine</name>
        <dbReference type="ChEBI" id="CHEBI:59789"/>
    </ligand>
</feature>
<feature type="binding site" evidence="1">
    <location>
        <begin position="132"/>
        <end position="133"/>
    </location>
    <ligand>
        <name>S-adenosyl-L-methionine</name>
        <dbReference type="ChEBI" id="CHEBI:59789"/>
    </ligand>
</feature>
<protein>
    <recommendedName>
        <fullName evidence="1">Ubiquinone/menaquinone biosynthesis C-methyltransferase UbiE</fullName>
        <ecNumber evidence="1">2.1.1.163</ecNumber>
        <ecNumber evidence="1">2.1.1.201</ecNumber>
    </recommendedName>
    <alternativeName>
        <fullName evidence="1">2-methoxy-6-polyprenyl-1,4-benzoquinol methylase</fullName>
    </alternativeName>
    <alternativeName>
        <fullName evidence="1">Demethylmenaquinone methyltransferase</fullName>
    </alternativeName>
</protein>
<proteinExistence type="inferred from homology"/>
<sequence>MTAETERIGVKGGMEYSFGFTKIDEAQKQSMVDGVFHSVAENYDKMNDILSLGLHRMWKNSMVAWLSPPAVFHWKVLDVAGGTGDIAFRILNASRQKAHATVLDINGSMLSVGKKRAEKNGLAPLIDFVEANAEHLPFEDQSFDAYTIAFGIRNVPHIDQALREAFRVLKPGGRFLCLEFSNVEMPLLDKIYDLWSFHAIPKLGQLIANDGDAYRYLVESIRKFPKQDDFAHMINHVGFSRVSYRNLTGAIAALHSAWKI</sequence>
<keyword id="KW-0474">Menaquinone biosynthesis</keyword>
<keyword id="KW-0489">Methyltransferase</keyword>
<keyword id="KW-0949">S-adenosyl-L-methionine</keyword>
<keyword id="KW-0808">Transferase</keyword>
<keyword id="KW-0831">Ubiquinone biosynthesis</keyword>
<name>UBIE_BARHE</name>
<organism>
    <name type="scientific">Bartonella henselae (strain ATCC 49882 / DSM 28221 / CCUG 30454 / Houston 1)</name>
    <name type="common">Rochalimaea henselae</name>
    <dbReference type="NCBI Taxonomy" id="283166"/>
    <lineage>
        <taxon>Bacteria</taxon>
        <taxon>Pseudomonadati</taxon>
        <taxon>Pseudomonadota</taxon>
        <taxon>Alphaproteobacteria</taxon>
        <taxon>Hyphomicrobiales</taxon>
        <taxon>Bartonellaceae</taxon>
        <taxon>Bartonella</taxon>
    </lineage>
</organism>
<reference key="1">
    <citation type="journal article" date="2004" name="Proc. Natl. Acad. Sci. U.S.A.">
        <title>The louse-borne human pathogen Bartonella quintana is a genomic derivative of the zoonotic agent Bartonella henselae.</title>
        <authorList>
            <person name="Alsmark U.C.M."/>
            <person name="Frank A.C."/>
            <person name="Karlberg E.O."/>
            <person name="Legault B.-A."/>
            <person name="Ardell D.H."/>
            <person name="Canbaeck B."/>
            <person name="Eriksson A.-S."/>
            <person name="Naeslund A.K."/>
            <person name="Handley S.A."/>
            <person name="Huvet M."/>
            <person name="La Scola B."/>
            <person name="Holmberg M."/>
            <person name="Andersson S.G.E."/>
        </authorList>
    </citation>
    <scope>NUCLEOTIDE SEQUENCE [LARGE SCALE GENOMIC DNA]</scope>
    <source>
        <strain>ATCC 49882 / DSM 28221 / CCUG 30454 / Houston 1</strain>
    </source>
</reference>
<gene>
    <name evidence="1" type="primary">ubiE</name>
    <name type="ordered locus">BH00400</name>
</gene>